<protein>
    <recommendedName>
        <fullName evidence="1">Glutathione-regulated potassium-efflux system ancillary protein KefF</fullName>
    </recommendedName>
    <alternativeName>
        <fullName evidence="1">Quinone oxidoreductase KefF</fullName>
        <ecNumber evidence="1">1.6.5.2</ecNumber>
    </alternativeName>
</protein>
<keyword id="KW-0997">Cell inner membrane</keyword>
<keyword id="KW-1003">Cell membrane</keyword>
<keyword id="KW-0285">Flavoprotein</keyword>
<keyword id="KW-0288">FMN</keyword>
<keyword id="KW-0472">Membrane</keyword>
<keyword id="KW-0520">NAD</keyword>
<keyword id="KW-0560">Oxidoreductase</keyword>
<reference key="1">
    <citation type="journal article" date="2001" name="Nature">
        <title>Complete genome sequence of a multiple drug resistant Salmonella enterica serovar Typhi CT18.</title>
        <authorList>
            <person name="Parkhill J."/>
            <person name="Dougan G."/>
            <person name="James K.D."/>
            <person name="Thomson N.R."/>
            <person name="Pickard D."/>
            <person name="Wain J."/>
            <person name="Churcher C.M."/>
            <person name="Mungall K.L."/>
            <person name="Bentley S.D."/>
            <person name="Holden M.T.G."/>
            <person name="Sebaihia M."/>
            <person name="Baker S."/>
            <person name="Basham D."/>
            <person name="Brooks K."/>
            <person name="Chillingworth T."/>
            <person name="Connerton P."/>
            <person name="Cronin A."/>
            <person name="Davis P."/>
            <person name="Davies R.M."/>
            <person name="Dowd L."/>
            <person name="White N."/>
            <person name="Farrar J."/>
            <person name="Feltwell T."/>
            <person name="Hamlin N."/>
            <person name="Haque A."/>
            <person name="Hien T.T."/>
            <person name="Holroyd S."/>
            <person name="Jagels K."/>
            <person name="Krogh A."/>
            <person name="Larsen T.S."/>
            <person name="Leather S."/>
            <person name="Moule S."/>
            <person name="O'Gaora P."/>
            <person name="Parry C."/>
            <person name="Quail M.A."/>
            <person name="Rutherford K.M."/>
            <person name="Simmonds M."/>
            <person name="Skelton J."/>
            <person name="Stevens K."/>
            <person name="Whitehead S."/>
            <person name="Barrell B.G."/>
        </authorList>
    </citation>
    <scope>NUCLEOTIDE SEQUENCE [LARGE SCALE GENOMIC DNA]</scope>
    <source>
        <strain>CT18</strain>
    </source>
</reference>
<reference key="2">
    <citation type="journal article" date="2003" name="J. Bacteriol.">
        <title>Comparative genomics of Salmonella enterica serovar Typhi strains Ty2 and CT18.</title>
        <authorList>
            <person name="Deng W."/>
            <person name="Liou S.-R."/>
            <person name="Plunkett G. III"/>
            <person name="Mayhew G.F."/>
            <person name="Rose D.J."/>
            <person name="Burland V."/>
            <person name="Kodoyianni V."/>
            <person name="Schwartz D.C."/>
            <person name="Blattner F.R."/>
        </authorList>
    </citation>
    <scope>NUCLEOTIDE SEQUENCE [LARGE SCALE GENOMIC DNA]</scope>
    <source>
        <strain>ATCC 700931 / Ty2</strain>
    </source>
</reference>
<evidence type="ECO:0000255" key="1">
    <source>
        <dbReference type="HAMAP-Rule" id="MF_01414"/>
    </source>
</evidence>
<name>KEFF_SALTI</name>
<dbReference type="EC" id="1.6.5.2" evidence="1"/>
<dbReference type="EMBL" id="AL513382">
    <property type="protein sequence ID" value="CAD01241.1"/>
    <property type="molecule type" value="Genomic_DNA"/>
</dbReference>
<dbReference type="EMBL" id="AE014613">
    <property type="protein sequence ID" value="AAO67821.1"/>
    <property type="molecule type" value="Genomic_DNA"/>
</dbReference>
<dbReference type="RefSeq" id="NP_454697.1">
    <property type="nucleotide sequence ID" value="NC_003198.1"/>
</dbReference>
<dbReference type="RefSeq" id="WP_000600696.1">
    <property type="nucleotide sequence ID" value="NZ_WSUR01000028.1"/>
</dbReference>
<dbReference type="SMR" id="Q8Z9K1"/>
<dbReference type="STRING" id="220341.gene:17584143"/>
<dbReference type="KEGG" id="stt:t0088"/>
<dbReference type="KEGG" id="sty:STY0100"/>
<dbReference type="PATRIC" id="fig|220341.7.peg.99"/>
<dbReference type="eggNOG" id="COG2249">
    <property type="taxonomic scope" value="Bacteria"/>
</dbReference>
<dbReference type="HOGENOM" id="CLU_058643_0_2_6"/>
<dbReference type="OMA" id="IWQHPMQ"/>
<dbReference type="OrthoDB" id="9798454at2"/>
<dbReference type="Proteomes" id="UP000000541">
    <property type="component" value="Chromosome"/>
</dbReference>
<dbReference type="Proteomes" id="UP000002670">
    <property type="component" value="Chromosome"/>
</dbReference>
<dbReference type="GO" id="GO:0005886">
    <property type="term" value="C:plasma membrane"/>
    <property type="evidence" value="ECO:0007669"/>
    <property type="project" value="UniProtKB-SubCell"/>
</dbReference>
<dbReference type="GO" id="GO:0009055">
    <property type="term" value="F:electron transfer activity"/>
    <property type="evidence" value="ECO:0007669"/>
    <property type="project" value="TreeGrafter"/>
</dbReference>
<dbReference type="GO" id="GO:0010181">
    <property type="term" value="F:FMN binding"/>
    <property type="evidence" value="ECO:0007669"/>
    <property type="project" value="UniProtKB-UniRule"/>
</dbReference>
<dbReference type="GO" id="GO:0050136">
    <property type="term" value="F:NADH:ubiquinone reductase (non-electrogenic) activity"/>
    <property type="evidence" value="ECO:0007669"/>
    <property type="project" value="RHEA"/>
</dbReference>
<dbReference type="GO" id="GO:0008753">
    <property type="term" value="F:NADPH dehydrogenase (quinone) activity"/>
    <property type="evidence" value="ECO:0007669"/>
    <property type="project" value="RHEA"/>
</dbReference>
<dbReference type="GO" id="GO:1901381">
    <property type="term" value="P:positive regulation of potassium ion transmembrane transport"/>
    <property type="evidence" value="ECO:0007669"/>
    <property type="project" value="UniProtKB-UniRule"/>
</dbReference>
<dbReference type="GO" id="GO:0006813">
    <property type="term" value="P:potassium ion transport"/>
    <property type="evidence" value="ECO:0007669"/>
    <property type="project" value="InterPro"/>
</dbReference>
<dbReference type="FunFam" id="3.40.50.360:FF:000008">
    <property type="entry name" value="Glutathione-regulated potassium-efflux system ancillary protein KefF"/>
    <property type="match status" value="1"/>
</dbReference>
<dbReference type="Gene3D" id="3.40.50.360">
    <property type="match status" value="1"/>
</dbReference>
<dbReference type="HAMAP" id="MF_01414">
    <property type="entry name" value="K_H_efflux_KefF"/>
    <property type="match status" value="1"/>
</dbReference>
<dbReference type="InterPro" id="IPR003680">
    <property type="entry name" value="Flavodoxin_fold"/>
</dbReference>
<dbReference type="InterPro" id="IPR029039">
    <property type="entry name" value="Flavoprotein-like_sf"/>
</dbReference>
<dbReference type="InterPro" id="IPR023948">
    <property type="entry name" value="K_H_efflux_KefF"/>
</dbReference>
<dbReference type="InterPro" id="IPR046980">
    <property type="entry name" value="KefG/KefF"/>
</dbReference>
<dbReference type="NCBIfam" id="NF002044">
    <property type="entry name" value="PRK00871.1"/>
    <property type="match status" value="1"/>
</dbReference>
<dbReference type="PANTHER" id="PTHR47307:SF2">
    <property type="entry name" value="GLUTATHIONE-REGULATED POTASSIUM-EFFLUX SYSTEM ANCILLARY PROTEIN KEFF"/>
    <property type="match status" value="1"/>
</dbReference>
<dbReference type="PANTHER" id="PTHR47307">
    <property type="entry name" value="GLUTATHIONE-REGULATED POTASSIUM-EFFLUX SYSTEM ANCILLARY PROTEIN KEFG"/>
    <property type="match status" value="1"/>
</dbReference>
<dbReference type="Pfam" id="PF02525">
    <property type="entry name" value="Flavodoxin_2"/>
    <property type="match status" value="1"/>
</dbReference>
<dbReference type="SUPFAM" id="SSF52218">
    <property type="entry name" value="Flavoproteins"/>
    <property type="match status" value="1"/>
</dbReference>
<feature type="chain" id="PRO_0000071639" description="Glutathione-regulated potassium-efflux system ancillary protein KefF">
    <location>
        <begin position="1"/>
        <end position="176"/>
    </location>
</feature>
<feature type="binding site" evidence="1">
    <location>
        <position position="8"/>
    </location>
    <ligand>
        <name>FMN</name>
        <dbReference type="ChEBI" id="CHEBI:58210"/>
    </ligand>
</feature>
<feature type="binding site" evidence="1">
    <location>
        <begin position="14"/>
        <end position="17"/>
    </location>
    <ligand>
        <name>FMN</name>
        <dbReference type="ChEBI" id="CHEBI:58210"/>
    </ligand>
</feature>
<feature type="binding site" evidence="1">
    <location>
        <begin position="65"/>
        <end position="68"/>
    </location>
    <ligand>
        <name>FMN</name>
        <dbReference type="ChEBI" id="CHEBI:58210"/>
    </ligand>
</feature>
<feature type="binding site" evidence="1">
    <location>
        <begin position="105"/>
        <end position="108"/>
    </location>
    <ligand>
        <name>FMN</name>
        <dbReference type="ChEBI" id="CHEBI:58210"/>
    </ligand>
</feature>
<organism>
    <name type="scientific">Salmonella typhi</name>
    <dbReference type="NCBI Taxonomy" id="90370"/>
    <lineage>
        <taxon>Bacteria</taxon>
        <taxon>Pseudomonadati</taxon>
        <taxon>Pseudomonadota</taxon>
        <taxon>Gammaproteobacteria</taxon>
        <taxon>Enterobacterales</taxon>
        <taxon>Enterobacteriaceae</taxon>
        <taxon>Salmonella</taxon>
    </lineage>
</organism>
<gene>
    <name evidence="1" type="primary">kefF</name>
    <name type="ordered locus">STY0100</name>
    <name type="ordered locus">t0088</name>
</gene>
<comment type="function">
    <text evidence="1">Regulatory subunit of a potassium efflux system that confers protection against electrophiles. Required for full activity of KefC. Shows redox enzymatic activity, but this enzymatic activity is not required for activation of KefC.</text>
</comment>
<comment type="catalytic activity">
    <reaction evidence="1">
        <text>a quinone + NADH + H(+) = a quinol + NAD(+)</text>
        <dbReference type="Rhea" id="RHEA:46160"/>
        <dbReference type="ChEBI" id="CHEBI:15378"/>
        <dbReference type="ChEBI" id="CHEBI:24646"/>
        <dbReference type="ChEBI" id="CHEBI:57540"/>
        <dbReference type="ChEBI" id="CHEBI:57945"/>
        <dbReference type="ChEBI" id="CHEBI:132124"/>
        <dbReference type="EC" id="1.6.5.2"/>
    </reaction>
</comment>
<comment type="catalytic activity">
    <reaction evidence="1">
        <text>a quinone + NADPH + H(+) = a quinol + NADP(+)</text>
        <dbReference type="Rhea" id="RHEA:46164"/>
        <dbReference type="ChEBI" id="CHEBI:15378"/>
        <dbReference type="ChEBI" id="CHEBI:24646"/>
        <dbReference type="ChEBI" id="CHEBI:57783"/>
        <dbReference type="ChEBI" id="CHEBI:58349"/>
        <dbReference type="ChEBI" id="CHEBI:132124"/>
        <dbReference type="EC" id="1.6.5.2"/>
    </reaction>
</comment>
<comment type="cofactor">
    <cofactor evidence="1">
        <name>FMN</name>
        <dbReference type="ChEBI" id="CHEBI:58210"/>
    </cofactor>
</comment>
<comment type="subunit">
    <text evidence="1">Homodimer. Interacts with KefC.</text>
</comment>
<comment type="subcellular location">
    <subcellularLocation>
        <location evidence="1">Cell inner membrane</location>
        <topology evidence="1">Peripheral membrane protein</topology>
        <orientation evidence="1">Cytoplasmic side</orientation>
    </subcellularLocation>
</comment>
<comment type="similarity">
    <text evidence="1">Belongs to the NAD(P)H dehydrogenase (quinone) family. KefF subfamily.</text>
</comment>
<accession>Q8Z9K1</accession>
<sequence length="176" mass="19943">MILIIYAHPYPHHSHANKQMLEQAGTLENVEIRSLYHLYPDFNIDVAAEQEALSRASLIVWQHPMQWYSVPPLLKLWMDKVLTHGWAYGHGGTALHGKHLLWAVTTGGGENHFAIGSHPGFAVLSQPLQATALYCGLKWLPPFAMHCTFICDDDTLQAQARQYKQRLLAWQEVNHG</sequence>
<proteinExistence type="inferred from homology"/>